<organism>
    <name type="scientific">Hylobates lar</name>
    <name type="common">Lar gibbon</name>
    <name type="synonym">White-handed gibbon</name>
    <dbReference type="NCBI Taxonomy" id="9580"/>
    <lineage>
        <taxon>Eukaryota</taxon>
        <taxon>Metazoa</taxon>
        <taxon>Chordata</taxon>
        <taxon>Craniata</taxon>
        <taxon>Vertebrata</taxon>
        <taxon>Euteleostomi</taxon>
        <taxon>Mammalia</taxon>
        <taxon>Eutheria</taxon>
        <taxon>Euarchontoglires</taxon>
        <taxon>Primates</taxon>
        <taxon>Haplorrhini</taxon>
        <taxon>Catarrhini</taxon>
        <taxon>Hylobatidae</taxon>
        <taxon>Hylobates</taxon>
    </lineage>
</organism>
<feature type="signal peptide" evidence="3">
    <location>
        <begin position="1"/>
        <end position="18"/>
    </location>
</feature>
<feature type="chain" id="PRO_0000001988" description="Apolipoprotein E">
    <location>
        <begin position="19"/>
        <end position="317"/>
    </location>
</feature>
<feature type="repeat" description="1">
    <location>
        <begin position="80"/>
        <end position="101"/>
    </location>
</feature>
<feature type="repeat" description="2">
    <location>
        <begin position="102"/>
        <end position="123"/>
    </location>
</feature>
<feature type="repeat" description="3">
    <location>
        <begin position="124"/>
        <end position="145"/>
    </location>
</feature>
<feature type="repeat" description="4">
    <location>
        <begin position="146"/>
        <end position="167"/>
    </location>
</feature>
<feature type="repeat" description="5">
    <location>
        <begin position="168"/>
        <end position="189"/>
    </location>
</feature>
<feature type="repeat" description="6">
    <location>
        <begin position="190"/>
        <end position="211"/>
    </location>
</feature>
<feature type="repeat" description="7">
    <location>
        <begin position="212"/>
        <end position="233"/>
    </location>
</feature>
<feature type="repeat" description="8">
    <location>
        <begin position="234"/>
        <end position="255"/>
    </location>
</feature>
<feature type="region of interest" description="8 X 22 AA approximate tandem repeats">
    <location>
        <begin position="80"/>
        <end position="255"/>
    </location>
</feature>
<feature type="region of interest" description="LDL and other lipoprotein receptors binding" evidence="1">
    <location>
        <begin position="158"/>
        <end position="168"/>
    </location>
</feature>
<feature type="region of interest" description="Lipid-binding and lipoprotein association" evidence="1">
    <location>
        <begin position="210"/>
        <end position="290"/>
    </location>
</feature>
<feature type="region of interest" description="Homooligomerization" evidence="1">
    <location>
        <begin position="266"/>
        <end position="317"/>
    </location>
</feature>
<feature type="region of interest" description="Specificity for association with VLDL" evidence="1">
    <location>
        <begin position="278"/>
        <end position="290"/>
    </location>
</feature>
<feature type="binding site" evidence="1">
    <location>
        <begin position="162"/>
        <end position="165"/>
    </location>
    <ligand>
        <name>heparin</name>
        <dbReference type="ChEBI" id="CHEBI:28304"/>
    </ligand>
</feature>
<feature type="binding site" evidence="1">
    <location>
        <begin position="229"/>
        <end position="236"/>
    </location>
    <ligand>
        <name>heparin</name>
        <dbReference type="ChEBI" id="CHEBI:28304"/>
    </ligand>
</feature>
<feature type="modified residue" description="Methionine sulfoxide" evidence="2">
    <location>
        <position position="143"/>
    </location>
</feature>
<feature type="modified residue" description="Phosphoserine" evidence="1">
    <location>
        <position position="147"/>
    </location>
</feature>
<keyword id="KW-0162">Chylomicron</keyword>
<keyword id="KW-0967">Endosome</keyword>
<keyword id="KW-0272">Extracellular matrix</keyword>
<keyword id="KW-0325">Glycoprotein</keyword>
<keyword id="KW-0345">HDL</keyword>
<keyword id="KW-0358">Heparin-binding</keyword>
<keyword id="KW-0445">Lipid transport</keyword>
<keyword id="KW-0446">Lipid-binding</keyword>
<keyword id="KW-0558">Oxidation</keyword>
<keyword id="KW-0597">Phosphoprotein</keyword>
<keyword id="KW-0677">Repeat</keyword>
<keyword id="KW-0964">Secreted</keyword>
<keyword id="KW-0732">Signal</keyword>
<keyword id="KW-0813">Transport</keyword>
<keyword id="KW-0850">VLDL</keyword>
<evidence type="ECO:0000250" key="1">
    <source>
        <dbReference type="UniProtKB" id="P02649"/>
    </source>
</evidence>
<evidence type="ECO:0000250" key="2">
    <source>
        <dbReference type="UniProtKB" id="P08226"/>
    </source>
</evidence>
<evidence type="ECO:0000255" key="3"/>
<evidence type="ECO:0000305" key="4"/>
<gene>
    <name type="primary">APOE</name>
</gene>
<comment type="function">
    <text evidence="1">APOE is an apolipoprotein, a protein associating with lipid particles, that mainly functions in lipoprotein-mediated lipid transport between organs via the plasma and interstitial fluids. APOE is a core component of plasma lipoproteins and is involved in their production, conversion and clearance. Apolipoproteins are amphipathic molecules that interact both with lipids of the lipoprotein particle core and the aqueous environment of the plasma. As such, APOE associates with chylomicrons, chylomicron remnants, very low density lipoproteins (VLDL) and intermediate density lipoproteins (IDL) but shows a preferential binding to high-density lipoproteins (HDL). It also binds a wide range of cellular receptors including the LDL receptor/LDLR, the LDL receptor-related proteins LRP1, LRP2 and LRP8 and the very low-density lipoprotein receptor/VLDLR that mediate the cellular uptake of the APOE-containing lipoprotein particles. Finally, APOE also has a heparin-binding activity and binds heparan-sulfate proteoglycans on the surface of cells, a property that supports the capture and the receptor-mediated uptake of APOE-containing lipoproteins by cells. A main function of APOE is to mediate lipoprotein clearance through the uptake of chylomicrons, VLDLs, and HDLs by hepatocytes. APOE is also involved in the biosynthesis by the liver of VLDLs as well as their uptake by peripheral tissues ensuring the delivery of triglycerides and energy storage in muscle, heart and adipose tissues. By participating in the lipoprotein-mediated distribution of lipids among tissues, APOE plays a critical role in plasma and tissues lipid homeostasis. APOE is also involved in two steps of reverse cholesterol transport, the HDLs-mediated transport of cholesterol from peripheral tissues to the liver, and thereby plays an important role in cholesterol homeostasis. First, it is functionally associated with ABCA1 in the biogenesis of HDLs in tissues. Second, it is enriched in circulating HDLs and mediates their uptake by hepatocytes. APOE also plays an important role in lipid transport in the central nervous system, regulating neuron survival and sprouting.</text>
</comment>
<comment type="subunit">
    <text evidence="1">Homotetramer. May interact with ABCA1; functionally associated with ABCA1 in the biogenesis of HDLs. May interact with APP/A4 amyloid-beta peptide; the interaction is extremely stable in vitro but its physiological significance is unclear. May interact with MAPT. May interact with MAP2. In the cerebrospinal fluid, interacts with secreted SORL1. Interacts with PMEL; this allows the loading of PMEL luminal fragment on ILVs to induce fibril nucleation.</text>
</comment>
<comment type="subcellular location">
    <subcellularLocation>
        <location evidence="1">Secreted</location>
    </subcellularLocation>
    <subcellularLocation>
        <location evidence="1">Secreted</location>
        <location evidence="1">Extracellular space</location>
    </subcellularLocation>
    <subcellularLocation>
        <location evidence="1">Secreted</location>
        <location evidence="1">Extracellular space</location>
        <location evidence="1">Extracellular matrix</location>
    </subcellularLocation>
    <subcellularLocation>
        <location evidence="1">Extracellular vesicle</location>
    </subcellularLocation>
    <subcellularLocation>
        <location evidence="1">Endosome</location>
        <location evidence="1">Multivesicular body</location>
    </subcellularLocation>
    <text evidence="1">In the plasma, APOE is associated with chylomicrons, chylomicrons remnants, VLDL, LDL and HDL lipoproteins. Lipid poor oligomeric APOE is associated with the extracellular matrix in a calcium- and heparan-sulfate proteoglycans-dependent manner. Lipidation induces the release from the extracellular matrix. Colocalizes with CD63 and PMEL at exosomes and in intraluminal vesicles within multivesicular endosomes.</text>
</comment>
<comment type="PTM">
    <text evidence="1">APOE exists as multiple glycosylated and sialylated glycoforms within cells and in plasma. The extent of glycosylation and sialylation are tissue and context specific.</text>
</comment>
<comment type="PTM">
    <text evidence="1">Glycated in plasma VLDL.</text>
</comment>
<comment type="PTM">
    <text evidence="1">Phosphorylated by FAM20C in the extracellular medium.</text>
</comment>
<comment type="similarity">
    <text evidence="4">Belongs to the apolipoprotein A1/A4/E family.</text>
</comment>
<proteinExistence type="inferred from homology"/>
<dbReference type="EMBL" id="AF200508">
    <property type="protein sequence ID" value="AAG28581.1"/>
    <property type="molecule type" value="Genomic_DNA"/>
</dbReference>
<dbReference type="EMBL" id="AF200506">
    <property type="protein sequence ID" value="AAG28581.1"/>
    <property type="status" value="JOINED"/>
    <property type="molecule type" value="Genomic_DNA"/>
</dbReference>
<dbReference type="EMBL" id="AF200507">
    <property type="protein sequence ID" value="AAG28581.1"/>
    <property type="status" value="JOINED"/>
    <property type="molecule type" value="Genomic_DNA"/>
</dbReference>
<dbReference type="SMR" id="Q9GLM6"/>
<dbReference type="GO" id="GO:0042627">
    <property type="term" value="C:chylomicron"/>
    <property type="evidence" value="ECO:0007669"/>
    <property type="project" value="UniProtKB-KW"/>
</dbReference>
<dbReference type="GO" id="GO:0070062">
    <property type="term" value="C:extracellular exosome"/>
    <property type="evidence" value="ECO:0000250"/>
    <property type="project" value="UniProtKB"/>
</dbReference>
<dbReference type="GO" id="GO:0031012">
    <property type="term" value="C:extracellular matrix"/>
    <property type="evidence" value="ECO:0000250"/>
    <property type="project" value="UniProtKB"/>
</dbReference>
<dbReference type="GO" id="GO:0005615">
    <property type="term" value="C:extracellular space"/>
    <property type="evidence" value="ECO:0000250"/>
    <property type="project" value="UniProtKB"/>
</dbReference>
<dbReference type="GO" id="GO:0034364">
    <property type="term" value="C:high-density lipoprotein particle"/>
    <property type="evidence" value="ECO:0000250"/>
    <property type="project" value="UniProtKB"/>
</dbReference>
<dbReference type="GO" id="GO:0034363">
    <property type="term" value="C:intermediate-density lipoprotein particle"/>
    <property type="evidence" value="ECO:0000250"/>
    <property type="project" value="UniProtKB"/>
</dbReference>
<dbReference type="GO" id="GO:0034362">
    <property type="term" value="C:low-density lipoprotein particle"/>
    <property type="evidence" value="ECO:0000250"/>
    <property type="project" value="UniProtKB"/>
</dbReference>
<dbReference type="GO" id="GO:0097487">
    <property type="term" value="C:multivesicular body, internal vesicle"/>
    <property type="evidence" value="ECO:0000250"/>
    <property type="project" value="UniProtKB"/>
</dbReference>
<dbReference type="GO" id="GO:0034361">
    <property type="term" value="C:very-low-density lipoprotein particle"/>
    <property type="evidence" value="ECO:0000250"/>
    <property type="project" value="UniProtKB"/>
</dbReference>
<dbReference type="GO" id="GO:0001540">
    <property type="term" value="F:amyloid-beta binding"/>
    <property type="evidence" value="ECO:0000250"/>
    <property type="project" value="UniProtKB"/>
</dbReference>
<dbReference type="GO" id="GO:0120020">
    <property type="term" value="F:cholesterol transfer activity"/>
    <property type="evidence" value="ECO:0007669"/>
    <property type="project" value="TreeGrafter"/>
</dbReference>
<dbReference type="GO" id="GO:0043395">
    <property type="term" value="F:heparan sulfate proteoglycan binding"/>
    <property type="evidence" value="ECO:0000250"/>
    <property type="project" value="UniProtKB"/>
</dbReference>
<dbReference type="GO" id="GO:0008201">
    <property type="term" value="F:heparin binding"/>
    <property type="evidence" value="ECO:0000250"/>
    <property type="project" value="UniProtKB"/>
</dbReference>
<dbReference type="GO" id="GO:0042802">
    <property type="term" value="F:identical protein binding"/>
    <property type="evidence" value="ECO:0000250"/>
    <property type="project" value="UniProtKB"/>
</dbReference>
<dbReference type="GO" id="GO:0050750">
    <property type="term" value="F:low-density lipoprotein particle receptor binding"/>
    <property type="evidence" value="ECO:0000250"/>
    <property type="project" value="UniProtKB"/>
</dbReference>
<dbReference type="GO" id="GO:0060228">
    <property type="term" value="F:phosphatidylcholine-sterol O-acyltransferase activator activity"/>
    <property type="evidence" value="ECO:0007669"/>
    <property type="project" value="TreeGrafter"/>
</dbReference>
<dbReference type="GO" id="GO:0005543">
    <property type="term" value="F:phospholipid binding"/>
    <property type="evidence" value="ECO:0007669"/>
    <property type="project" value="TreeGrafter"/>
</dbReference>
<dbReference type="GO" id="GO:0055090">
    <property type="term" value="P:acylglycerol homeostasis"/>
    <property type="evidence" value="ECO:0007669"/>
    <property type="project" value="TreeGrafter"/>
</dbReference>
<dbReference type="GO" id="GO:0033344">
    <property type="term" value="P:cholesterol efflux"/>
    <property type="evidence" value="ECO:0000250"/>
    <property type="project" value="UniProtKB"/>
</dbReference>
<dbReference type="GO" id="GO:0008203">
    <property type="term" value="P:cholesterol metabolic process"/>
    <property type="evidence" value="ECO:0007669"/>
    <property type="project" value="TreeGrafter"/>
</dbReference>
<dbReference type="GO" id="GO:0034382">
    <property type="term" value="P:chylomicron remnant clearance"/>
    <property type="evidence" value="ECO:0000250"/>
    <property type="project" value="UniProtKB"/>
</dbReference>
<dbReference type="GO" id="GO:0034380">
    <property type="term" value="P:high-density lipoprotein particle assembly"/>
    <property type="evidence" value="ECO:0000250"/>
    <property type="project" value="UniProtKB"/>
</dbReference>
<dbReference type="GO" id="GO:0071831">
    <property type="term" value="P:intermediate-density lipoprotein particle clearance"/>
    <property type="evidence" value="ECO:0000250"/>
    <property type="project" value="UniProtKB"/>
</dbReference>
<dbReference type="GO" id="GO:0042158">
    <property type="term" value="P:lipoprotein biosynthetic process"/>
    <property type="evidence" value="ECO:0000250"/>
    <property type="project" value="UniProtKB"/>
</dbReference>
<dbReference type="GO" id="GO:0032438">
    <property type="term" value="P:melanosome organization"/>
    <property type="evidence" value="ECO:0000250"/>
    <property type="project" value="UniProtKB"/>
</dbReference>
<dbReference type="GO" id="GO:1905907">
    <property type="term" value="P:negative regulation of amyloid fibril formation"/>
    <property type="evidence" value="ECO:0000250"/>
    <property type="project" value="UniProtKB"/>
</dbReference>
<dbReference type="GO" id="GO:0031175">
    <property type="term" value="P:neuron projection development"/>
    <property type="evidence" value="ECO:0000250"/>
    <property type="project" value="UniProtKB"/>
</dbReference>
<dbReference type="GO" id="GO:0033700">
    <property type="term" value="P:phospholipid efflux"/>
    <property type="evidence" value="ECO:0007669"/>
    <property type="project" value="TreeGrafter"/>
</dbReference>
<dbReference type="GO" id="GO:1900223">
    <property type="term" value="P:positive regulation of amyloid-beta clearance"/>
    <property type="evidence" value="ECO:0000250"/>
    <property type="project" value="UniProtKB"/>
</dbReference>
<dbReference type="GO" id="GO:0071830">
    <property type="term" value="P:triglyceride-rich lipoprotein particle clearance"/>
    <property type="evidence" value="ECO:0000250"/>
    <property type="project" value="UniProtKB"/>
</dbReference>
<dbReference type="GO" id="GO:0034447">
    <property type="term" value="P:very-low-density lipoprotein particle clearance"/>
    <property type="evidence" value="ECO:0000250"/>
    <property type="project" value="UniProtKB"/>
</dbReference>
<dbReference type="FunFam" id="1.20.120.20:FF:000002">
    <property type="entry name" value="Apolipoprotein E"/>
    <property type="match status" value="1"/>
</dbReference>
<dbReference type="FunFam" id="1.20.120.20:FF:000003">
    <property type="entry name" value="Apolipoprotein E"/>
    <property type="match status" value="1"/>
</dbReference>
<dbReference type="Gene3D" id="1.20.120.20">
    <property type="entry name" value="Apolipoprotein"/>
    <property type="match status" value="2"/>
</dbReference>
<dbReference type="InterPro" id="IPR000074">
    <property type="entry name" value="ApoA_E"/>
</dbReference>
<dbReference type="InterPro" id="IPR050163">
    <property type="entry name" value="Apolipoprotein_A1/A4/E"/>
</dbReference>
<dbReference type="PANTHER" id="PTHR18976">
    <property type="entry name" value="APOLIPOPROTEIN"/>
    <property type="match status" value="1"/>
</dbReference>
<dbReference type="PANTHER" id="PTHR18976:SF2">
    <property type="entry name" value="APOLIPOPROTEIN E"/>
    <property type="match status" value="1"/>
</dbReference>
<dbReference type="Pfam" id="PF01442">
    <property type="entry name" value="Apolipoprotein"/>
    <property type="match status" value="1"/>
</dbReference>
<dbReference type="SUPFAM" id="SSF58113">
    <property type="entry name" value="Apolipoprotein A-I"/>
    <property type="match status" value="1"/>
</dbReference>
<name>APOE_HYLLA</name>
<reference key="1">
    <citation type="submission" date="1999-11" db="EMBL/GenBank/DDBJ databases">
        <title>APOE gene evolution in Hominoidea.</title>
        <authorList>
            <person name="Rogaev E.I."/>
            <person name="Dvorianchikov G.A."/>
            <person name="Riazanskaia N.N."/>
        </authorList>
    </citation>
    <scope>NUCLEOTIDE SEQUENCE [GENOMIC DNA]</scope>
</reference>
<sequence length="317" mass="35983">MKVLWAALLVTFLAGCQAKVEQAVEPEPEPELRQQAEWQSGQPWELALGRFWDYLRWVQTLSEQVQEELLSSQVTQELTALMDETMKELKAYRSELEEQLTPVAEETRARLSKELQAAQARLGADMEDVRGRLVQYRGEVQAMLGQSTEELRARLASHLRKLRKRLLRDADDLQKRLAVYQAGAREGAERGVSAIRERLGPLVEQGRVRAATVGSLAGQPLQERAQAWGERLRARMEEVGGRTRDRLDEVKEQVAEVRAKLEEQAQQIRLQAEAFQARLKSWFEPLVEDMQRQWAGLVEKVQAAVGTSAAPVPSDNH</sequence>
<protein>
    <recommendedName>
        <fullName>Apolipoprotein E</fullName>
        <shortName>Apo-E</shortName>
    </recommendedName>
</protein>
<accession>Q9GLM6</accession>